<accession>B7MNS0</accession>
<comment type="catalytic activity">
    <reaction evidence="1">
        <text>D-ribulose + ATP = D-ribulose 5-phosphate + ADP + H(+)</text>
        <dbReference type="Rhea" id="RHEA:17601"/>
        <dbReference type="ChEBI" id="CHEBI:15378"/>
        <dbReference type="ChEBI" id="CHEBI:17173"/>
        <dbReference type="ChEBI" id="CHEBI:30616"/>
        <dbReference type="ChEBI" id="CHEBI:58121"/>
        <dbReference type="ChEBI" id="CHEBI:456216"/>
        <dbReference type="EC" id="2.7.1.16"/>
    </reaction>
</comment>
<comment type="catalytic activity">
    <reaction evidence="1">
        <text>L-ribulose + ATP = L-ribulose 5-phosphate + ADP + H(+)</text>
        <dbReference type="Rhea" id="RHEA:22072"/>
        <dbReference type="ChEBI" id="CHEBI:15378"/>
        <dbReference type="ChEBI" id="CHEBI:16880"/>
        <dbReference type="ChEBI" id="CHEBI:30616"/>
        <dbReference type="ChEBI" id="CHEBI:58226"/>
        <dbReference type="ChEBI" id="CHEBI:456216"/>
        <dbReference type="EC" id="2.7.1.16"/>
    </reaction>
</comment>
<comment type="pathway">
    <text evidence="1">Carbohydrate degradation; L-arabinose degradation via L-ribulose; D-xylulose 5-phosphate from L-arabinose (bacterial route): step 2/3.</text>
</comment>
<comment type="similarity">
    <text evidence="1">Belongs to the ribulokinase family.</text>
</comment>
<proteinExistence type="inferred from homology"/>
<evidence type="ECO:0000255" key="1">
    <source>
        <dbReference type="HAMAP-Rule" id="MF_00520"/>
    </source>
</evidence>
<sequence>MAIAIGLDFGSDSVRALAVDCATGEEIATSVEWYPRWQNGQFCDAPNNQFRHHPRDYIESMEAALKTVLAELSVEQREAVVGIGVDTTGSTPAPIDADGNVLALRPEFAENPNAMFVLWKDHTAVEEAEEITRLCHTPGNVDYSRYIGGIYSSEWFWAKILHITRQDNAVAQSAASWIELCDWVPALLSGTTRPQDIRRGRCSAGHKSLWHESWGGLPPASFFDELDPILNRHLPSPLFTETWTADIPVGTLCPEWAQRLGLPESVVISGGAFDCHMGAVGAGAQPNALVKVIGTSTCDILIADKQSVGERAVKGICGQVDGSVVPGFIGLEAGQSAFGDIYAWFGRVLGWPLEQLAAQHPELKEQINASQKQLLPALTEAWAKNPSLDHLPVVLDWFNGRRTPNANQRLKGVITDLNLATDAPLLFGGLIAATAFGARAIMECFTAQGIAVNNVMALGGIARKNQVIMQACCDVLNRPLQIVASDQCCALGAAIFAAVAAKVHADIPSAQQKMASAVEKTLQPCSEQAQRFEQLYRRYQQWAMSAEQHYLPTSAPAQAAQAVPTL</sequence>
<protein>
    <recommendedName>
        <fullName evidence="1">Ribulokinase</fullName>
        <ecNumber evidence="1">2.7.1.16</ecNumber>
    </recommendedName>
</protein>
<keyword id="KW-0054">Arabinose catabolism</keyword>
<keyword id="KW-0067">ATP-binding</keyword>
<keyword id="KW-0119">Carbohydrate metabolism</keyword>
<keyword id="KW-0418">Kinase</keyword>
<keyword id="KW-0547">Nucleotide-binding</keyword>
<keyword id="KW-0808">Transferase</keyword>
<reference key="1">
    <citation type="journal article" date="2009" name="PLoS Genet.">
        <title>Organised genome dynamics in the Escherichia coli species results in highly diverse adaptive paths.</title>
        <authorList>
            <person name="Touchon M."/>
            <person name="Hoede C."/>
            <person name="Tenaillon O."/>
            <person name="Barbe V."/>
            <person name="Baeriswyl S."/>
            <person name="Bidet P."/>
            <person name="Bingen E."/>
            <person name="Bonacorsi S."/>
            <person name="Bouchier C."/>
            <person name="Bouvet O."/>
            <person name="Calteau A."/>
            <person name="Chiapello H."/>
            <person name="Clermont O."/>
            <person name="Cruveiller S."/>
            <person name="Danchin A."/>
            <person name="Diard M."/>
            <person name="Dossat C."/>
            <person name="Karoui M.E."/>
            <person name="Frapy E."/>
            <person name="Garry L."/>
            <person name="Ghigo J.M."/>
            <person name="Gilles A.M."/>
            <person name="Johnson J."/>
            <person name="Le Bouguenec C."/>
            <person name="Lescat M."/>
            <person name="Mangenot S."/>
            <person name="Martinez-Jehanne V."/>
            <person name="Matic I."/>
            <person name="Nassif X."/>
            <person name="Oztas S."/>
            <person name="Petit M.A."/>
            <person name="Pichon C."/>
            <person name="Rouy Z."/>
            <person name="Ruf C.S."/>
            <person name="Schneider D."/>
            <person name="Tourret J."/>
            <person name="Vacherie B."/>
            <person name="Vallenet D."/>
            <person name="Medigue C."/>
            <person name="Rocha E.P.C."/>
            <person name="Denamur E."/>
        </authorList>
    </citation>
    <scope>NUCLEOTIDE SEQUENCE [LARGE SCALE GENOMIC DNA]</scope>
    <source>
        <strain>ED1a</strain>
    </source>
</reference>
<gene>
    <name evidence="1" type="primary">araB</name>
    <name type="ordered locus">ECED1_0062</name>
</gene>
<organism>
    <name type="scientific">Escherichia coli O81 (strain ED1a)</name>
    <dbReference type="NCBI Taxonomy" id="585397"/>
    <lineage>
        <taxon>Bacteria</taxon>
        <taxon>Pseudomonadati</taxon>
        <taxon>Pseudomonadota</taxon>
        <taxon>Gammaproteobacteria</taxon>
        <taxon>Enterobacterales</taxon>
        <taxon>Enterobacteriaceae</taxon>
        <taxon>Escherichia</taxon>
    </lineage>
</organism>
<feature type="chain" id="PRO_1000189554" description="Ribulokinase">
    <location>
        <begin position="1"/>
        <end position="566"/>
    </location>
</feature>
<name>ARAB_ECO81</name>
<dbReference type="EC" id="2.7.1.16" evidence="1"/>
<dbReference type="EMBL" id="CU928162">
    <property type="protein sequence ID" value="CAR06285.1"/>
    <property type="molecule type" value="Genomic_DNA"/>
</dbReference>
<dbReference type="RefSeq" id="WP_000951870.1">
    <property type="nucleotide sequence ID" value="NC_011745.1"/>
</dbReference>
<dbReference type="SMR" id="B7MNS0"/>
<dbReference type="KEGG" id="ecq:ECED1_0062"/>
<dbReference type="HOGENOM" id="CLU_009281_9_1_6"/>
<dbReference type="UniPathway" id="UPA00145">
    <property type="reaction ID" value="UER00566"/>
</dbReference>
<dbReference type="Proteomes" id="UP000000748">
    <property type="component" value="Chromosome"/>
</dbReference>
<dbReference type="GO" id="GO:0005737">
    <property type="term" value="C:cytoplasm"/>
    <property type="evidence" value="ECO:0007669"/>
    <property type="project" value="TreeGrafter"/>
</dbReference>
<dbReference type="GO" id="GO:0005524">
    <property type="term" value="F:ATP binding"/>
    <property type="evidence" value="ECO:0007669"/>
    <property type="project" value="UniProtKB-KW"/>
</dbReference>
<dbReference type="GO" id="GO:0019150">
    <property type="term" value="F:D-ribulokinase activity"/>
    <property type="evidence" value="ECO:0007669"/>
    <property type="project" value="RHEA"/>
</dbReference>
<dbReference type="GO" id="GO:0008741">
    <property type="term" value="F:ribulokinase activity"/>
    <property type="evidence" value="ECO:0007669"/>
    <property type="project" value="UniProtKB-UniRule"/>
</dbReference>
<dbReference type="GO" id="GO:0019569">
    <property type="term" value="P:L-arabinose catabolic process to xylulose 5-phosphate"/>
    <property type="evidence" value="ECO:0007669"/>
    <property type="project" value="UniProtKB-UniRule"/>
</dbReference>
<dbReference type="CDD" id="cd07781">
    <property type="entry name" value="ASKHA_NBD_FGGY_L-RBK"/>
    <property type="match status" value="1"/>
</dbReference>
<dbReference type="Gene3D" id="1.20.58.2240">
    <property type="match status" value="1"/>
</dbReference>
<dbReference type="Gene3D" id="3.30.420.40">
    <property type="match status" value="1"/>
</dbReference>
<dbReference type="HAMAP" id="MF_00520">
    <property type="entry name" value="Ribulokinase"/>
    <property type="match status" value="1"/>
</dbReference>
<dbReference type="InterPro" id="IPR043129">
    <property type="entry name" value="ATPase_NBD"/>
</dbReference>
<dbReference type="InterPro" id="IPR018485">
    <property type="entry name" value="FGGY_C"/>
</dbReference>
<dbReference type="InterPro" id="IPR005929">
    <property type="entry name" value="Ribulokinase"/>
</dbReference>
<dbReference type="NCBIfam" id="TIGR01234">
    <property type="entry name" value="L-ribulokinase"/>
    <property type="match status" value="1"/>
</dbReference>
<dbReference type="NCBIfam" id="NF003154">
    <property type="entry name" value="PRK04123.1"/>
    <property type="match status" value="1"/>
</dbReference>
<dbReference type="PANTHER" id="PTHR43435:SF4">
    <property type="entry name" value="FGGY CARBOHYDRATE KINASE DOMAIN-CONTAINING PROTEIN"/>
    <property type="match status" value="1"/>
</dbReference>
<dbReference type="PANTHER" id="PTHR43435">
    <property type="entry name" value="RIBULOKINASE"/>
    <property type="match status" value="1"/>
</dbReference>
<dbReference type="Pfam" id="PF02782">
    <property type="entry name" value="FGGY_C"/>
    <property type="match status" value="1"/>
</dbReference>
<dbReference type="SUPFAM" id="SSF53067">
    <property type="entry name" value="Actin-like ATPase domain"/>
    <property type="match status" value="2"/>
</dbReference>